<evidence type="ECO:0000255" key="1"/>
<evidence type="ECO:0000305" key="2"/>
<dbReference type="EMBL" id="L43967">
    <property type="protein sequence ID" value="AAC71544.1"/>
    <property type="molecule type" value="Genomic_DNA"/>
</dbReference>
<dbReference type="PIR" id="F64235">
    <property type="entry name" value="F64235"/>
</dbReference>
<dbReference type="SMR" id="P47564"/>
<dbReference type="FunCoup" id="P47564">
    <property type="interactions" value="90"/>
</dbReference>
<dbReference type="STRING" id="243273.MG_322"/>
<dbReference type="KEGG" id="mge:MG_322"/>
<dbReference type="eggNOG" id="COG0168">
    <property type="taxonomic scope" value="Bacteria"/>
</dbReference>
<dbReference type="HOGENOM" id="CLU_026429_0_1_14"/>
<dbReference type="InParanoid" id="P47564"/>
<dbReference type="Proteomes" id="UP000000807">
    <property type="component" value="Chromosome"/>
</dbReference>
<dbReference type="GO" id="GO:0005886">
    <property type="term" value="C:plasma membrane"/>
    <property type="evidence" value="ECO:0000318"/>
    <property type="project" value="GO_Central"/>
</dbReference>
<dbReference type="GO" id="GO:0015079">
    <property type="term" value="F:potassium ion transmembrane transporter activity"/>
    <property type="evidence" value="ECO:0000318"/>
    <property type="project" value="GO_Central"/>
</dbReference>
<dbReference type="GO" id="GO:0071805">
    <property type="term" value="P:potassium ion transmembrane transport"/>
    <property type="evidence" value="ECO:0000318"/>
    <property type="project" value="GO_Central"/>
</dbReference>
<dbReference type="InterPro" id="IPR003445">
    <property type="entry name" value="Cat_transpt"/>
</dbReference>
<dbReference type="PANTHER" id="PTHR32024:SF1">
    <property type="entry name" value="KTR SYSTEM POTASSIUM UPTAKE PROTEIN B"/>
    <property type="match status" value="1"/>
</dbReference>
<dbReference type="PANTHER" id="PTHR32024">
    <property type="entry name" value="TRK SYSTEM POTASSIUM UPTAKE PROTEIN TRKG-RELATED"/>
    <property type="match status" value="1"/>
</dbReference>
<dbReference type="Pfam" id="PF02386">
    <property type="entry name" value="TrkH"/>
    <property type="match status" value="1"/>
</dbReference>
<protein>
    <recommendedName>
        <fullName>Uncharacterized cation transporter MG322</fullName>
    </recommendedName>
</protein>
<keyword id="KW-1003">Cell membrane</keyword>
<keyword id="KW-0406">Ion transport</keyword>
<keyword id="KW-0472">Membrane</keyword>
<keyword id="KW-1185">Reference proteome</keyword>
<keyword id="KW-0812">Transmembrane</keyword>
<keyword id="KW-1133">Transmembrane helix</keyword>
<keyword id="KW-0813">Transport</keyword>
<sequence length="558" mass="61612">MVKLTTWLKKIGWGETITQRIFCFYIYCILFGSLLLFLPIALQDNYQKVVSYGIDWQGKRFEQKTDYNFLDALFLSTSAFSDTGLSTVVVSKTYSIFGQIVLAVLLQLGGIGFVVIAFLAWRLFNFHKKEQYSFYEKLMLQSERGGSKLGNTSEMILVSIIFLFIVELIYGFLYGILFYFIPGFEPANLFADHAKVSTQLKALVVDSNQTIAAFNDINKAFQAGFFHSLSAVNNAGIDLIGGSSFVPYRNGLGIIIQWLTISQIIFGGIGYPCLFDGFEAIKKKIKYGRHTKHQFSLFTKLTVITNIVVILLFFTLLLMVEFIASDSLTNTIVNFSDEKKSLINTQLQSQSNQAIHASVFGNNPNASRVMQLFFMVISSRSAGFSVFPVASEIQTTKIIIALAMFIGASPSSTAGGIRTTTLAVIFLALVAKFKGQKEVKAFKRSIDQTTVIDAFLVLIISLIAVLLTAVLLPLSMEQPVSFIDALFETTSAFGTVGLSSGATVNIALDPNRNTFNFLALCLLMVMGQVGVSSSVLTFVRKHPKANSYSYPKEAVKIG</sequence>
<feature type="chain" id="PRO_0000070481" description="Uncharacterized cation transporter MG322">
    <location>
        <begin position="1"/>
        <end position="558"/>
    </location>
</feature>
<feature type="transmembrane region" description="Helical" evidence="1">
    <location>
        <begin position="21"/>
        <end position="41"/>
    </location>
</feature>
<feature type="transmembrane region" description="Helical" evidence="1">
    <location>
        <begin position="69"/>
        <end position="89"/>
    </location>
</feature>
<feature type="transmembrane region" description="Helical" evidence="1">
    <location>
        <begin position="100"/>
        <end position="120"/>
    </location>
</feature>
<feature type="transmembrane region" description="Helical" evidence="1">
    <location>
        <begin position="160"/>
        <end position="180"/>
    </location>
</feature>
<feature type="transmembrane region" description="Helical" evidence="1">
    <location>
        <begin position="220"/>
        <end position="240"/>
    </location>
</feature>
<feature type="transmembrane region" description="Helical" evidence="1">
    <location>
        <begin position="251"/>
        <end position="271"/>
    </location>
</feature>
<feature type="transmembrane region" description="Helical" evidence="1">
    <location>
        <begin position="303"/>
        <end position="323"/>
    </location>
</feature>
<feature type="transmembrane region" description="Helical" evidence="1">
    <location>
        <begin position="386"/>
        <end position="406"/>
    </location>
</feature>
<feature type="transmembrane region" description="Helical" evidence="1">
    <location>
        <begin position="413"/>
        <end position="433"/>
    </location>
</feature>
<feature type="transmembrane region" description="Helical" evidence="1">
    <location>
        <begin position="454"/>
        <end position="474"/>
    </location>
</feature>
<feature type="transmembrane region" description="Helical" evidence="1">
    <location>
        <begin position="479"/>
        <end position="499"/>
    </location>
</feature>
<feature type="transmembrane region" description="Helical" evidence="1">
    <location>
        <begin position="519"/>
        <end position="539"/>
    </location>
</feature>
<organism>
    <name type="scientific">Mycoplasma genitalium (strain ATCC 33530 / DSM 19775 / NCTC 10195 / G37)</name>
    <name type="common">Mycoplasmoides genitalium</name>
    <dbReference type="NCBI Taxonomy" id="243273"/>
    <lineage>
        <taxon>Bacteria</taxon>
        <taxon>Bacillati</taxon>
        <taxon>Mycoplasmatota</taxon>
        <taxon>Mycoplasmoidales</taxon>
        <taxon>Mycoplasmoidaceae</taxon>
        <taxon>Mycoplasmoides</taxon>
    </lineage>
</organism>
<gene>
    <name type="ordered locus">MG322</name>
</gene>
<accession>P47564</accession>
<reference key="1">
    <citation type="journal article" date="1995" name="Science">
        <title>The minimal gene complement of Mycoplasma genitalium.</title>
        <authorList>
            <person name="Fraser C.M."/>
            <person name="Gocayne J.D."/>
            <person name="White O."/>
            <person name="Adams M.D."/>
            <person name="Clayton R.A."/>
            <person name="Fleischmann R.D."/>
            <person name="Bult C.J."/>
            <person name="Kerlavage A.R."/>
            <person name="Sutton G.G."/>
            <person name="Kelley J.M."/>
            <person name="Fritchman J.L."/>
            <person name="Weidman J.F."/>
            <person name="Small K.V."/>
            <person name="Sandusky M."/>
            <person name="Fuhrmann J.L."/>
            <person name="Nguyen D.T."/>
            <person name="Utterback T.R."/>
            <person name="Saudek D.M."/>
            <person name="Phillips C.A."/>
            <person name="Merrick J.M."/>
            <person name="Tomb J.-F."/>
            <person name="Dougherty B.A."/>
            <person name="Bott K.F."/>
            <person name="Hu P.-C."/>
            <person name="Lucier T.S."/>
            <person name="Peterson S.N."/>
            <person name="Smith H.O."/>
            <person name="Hutchison C.A. III"/>
            <person name="Venter J.C."/>
        </authorList>
    </citation>
    <scope>NUCLEOTIDE SEQUENCE [LARGE SCALE GENOMIC DNA]</scope>
    <source>
        <strain>ATCC 33530 / DSM 19775 / NCTC 10195 / G37</strain>
    </source>
</reference>
<proteinExistence type="inferred from homology"/>
<comment type="subcellular location">
    <subcellularLocation>
        <location evidence="2">Cell membrane</location>
        <topology evidence="2">Multi-pass membrane protein</topology>
    </subcellularLocation>
</comment>
<comment type="similarity">
    <text evidence="2">Belongs to the TrkH potassium transport family.</text>
</comment>
<name>Y322_MYCGE</name>